<proteinExistence type="evidence at protein level"/>
<organism>
    <name type="scientific">Rattus norvegicus</name>
    <name type="common">Rat</name>
    <dbReference type="NCBI Taxonomy" id="10116"/>
    <lineage>
        <taxon>Eukaryota</taxon>
        <taxon>Metazoa</taxon>
        <taxon>Chordata</taxon>
        <taxon>Craniata</taxon>
        <taxon>Vertebrata</taxon>
        <taxon>Euteleostomi</taxon>
        <taxon>Mammalia</taxon>
        <taxon>Eutheria</taxon>
        <taxon>Euarchontoglires</taxon>
        <taxon>Glires</taxon>
        <taxon>Rodentia</taxon>
        <taxon>Myomorpha</taxon>
        <taxon>Muroidea</taxon>
        <taxon>Muridae</taxon>
        <taxon>Murinae</taxon>
        <taxon>Rattus</taxon>
    </lineage>
</organism>
<comment type="function">
    <text evidence="1">One gap junction consists of a cluster of closely packed pairs of transmembrane channels, the connexons, through which materials of low MW diffuse from one cell to a neighboring cell. May play a role in myelination in central and peripheral nervous systems (By similarity).</text>
</comment>
<comment type="subunit">
    <text evidence="1">A connexon is composed of a hexamer of connexins. Interacts with TJP1 (By similarity).</text>
</comment>
<comment type="subcellular location">
    <subcellularLocation>
        <location>Cell membrane</location>
        <topology>Multi-pass membrane protein</topology>
    </subcellularLocation>
    <subcellularLocation>
        <location>Cell junction</location>
        <location>Gap junction</location>
    </subcellularLocation>
</comment>
<comment type="tissue specificity">
    <text evidence="5">Mainly expressed by oligodendrocytes in the central nervous system. Expressed in optic nerve (at protein level).</text>
</comment>
<comment type="similarity">
    <text evidence="6">Belongs to the connexin family. Gamma-type subfamily.</text>
</comment>
<gene>
    <name type="primary">Gjc2</name>
    <name type="synonym">Gja12</name>
</gene>
<protein>
    <recommendedName>
        <fullName>Gap junction gamma-2 protein</fullName>
    </recommendedName>
    <alternativeName>
        <fullName>Connexin-47</fullName>
        <shortName>Cx47</shortName>
    </alternativeName>
    <alternativeName>
        <fullName>Gap junction alpha-12 protein</fullName>
    </alternativeName>
</protein>
<name>CXG2_RAT</name>
<sequence length="440" mass="46990">MTNMSWSFLTRLLEEIHNHSTFVGKVWLTVLVVFRIVLTAVGGESIYSDEQSKFTCNTRQPGCDNVCYDAFAPLSHVRFWVFQIVVISTPSVMYLGYAVHRLARASEQERRRALRRRPGPRRLPRAQLPPPPPGWPDTTDLGEAEPILALEEDEDEEPGAPEGPGEDTEEERTEDVAAKGGGGDGKTVVTPGPAGQHDGRRRIQREGLMRVYVAQLVVRAAFEVAFLVGQYLLYGFEVPPFFACSRQPCPHVVDCFVSRPTEKTVFLLVMYVVSCLCLLLNLCEMAHLGLGSAQDAVRGRRGASAAGPGPAPRPPPCAFPAAAAGLACPPDYSLVVRAAERARAHDQNLANLALQALRDGAAVAAVSADRDSPPCSGLNATSRGPPRAGGPASGTGSATSGGTVGEQGRSGAQEQLATKPRVGSEKGSTGSRDGKATVWI</sequence>
<keyword id="KW-0965">Cell junction</keyword>
<keyword id="KW-1003">Cell membrane</keyword>
<keyword id="KW-0303">Gap junction</keyword>
<keyword id="KW-0472">Membrane</keyword>
<keyword id="KW-0597">Phosphoprotein</keyword>
<keyword id="KW-1185">Reference proteome</keyword>
<keyword id="KW-0812">Transmembrane</keyword>
<keyword id="KW-1133">Transmembrane helix</keyword>
<dbReference type="EMBL" id="AABR03074951">
    <property type="status" value="NOT_ANNOTATED_CDS"/>
    <property type="molecule type" value="Genomic_DNA"/>
</dbReference>
<dbReference type="EMBL" id="AY233216">
    <property type="protein sequence ID" value="AAP04733.1"/>
    <property type="molecule type" value="Genomic_DNA"/>
</dbReference>
<dbReference type="RefSeq" id="NP_001094254.1">
    <property type="nucleotide sequence ID" value="NM_001100784.1"/>
</dbReference>
<dbReference type="RefSeq" id="XP_006246577.1">
    <property type="nucleotide sequence ID" value="XM_006246515.5"/>
</dbReference>
<dbReference type="RefSeq" id="XP_017452934.1">
    <property type="nucleotide sequence ID" value="XM_017597445.1"/>
</dbReference>
<dbReference type="RefSeq" id="XP_017452935.1">
    <property type="nucleotide sequence ID" value="XM_017597446.1"/>
</dbReference>
<dbReference type="RefSeq" id="XP_017452936.1">
    <property type="nucleotide sequence ID" value="XM_017597447.1"/>
</dbReference>
<dbReference type="SMR" id="Q80XF7"/>
<dbReference type="BioGRID" id="269223">
    <property type="interactions" value="1"/>
</dbReference>
<dbReference type="FunCoup" id="Q80XF7">
    <property type="interactions" value="214"/>
</dbReference>
<dbReference type="STRING" id="10116.ENSRNOP00000064383"/>
<dbReference type="iPTMnet" id="Q80XF7"/>
<dbReference type="PhosphoSitePlus" id="Q80XF7"/>
<dbReference type="PaxDb" id="10116-ENSRNOP00000064383"/>
<dbReference type="Ensembl" id="ENSRNOT00000058362.4">
    <property type="protein sequence ID" value="ENSRNOP00000064383.1"/>
    <property type="gene ID" value="ENSRNOG00000038328.4"/>
</dbReference>
<dbReference type="GeneID" id="497913"/>
<dbReference type="KEGG" id="rno:497913"/>
<dbReference type="UCSC" id="RGD:1562712">
    <property type="organism name" value="rat"/>
</dbReference>
<dbReference type="AGR" id="RGD:1562712"/>
<dbReference type="CTD" id="57165"/>
<dbReference type="RGD" id="1562712">
    <property type="gene designation" value="Gjc2"/>
</dbReference>
<dbReference type="eggNOG" id="ENOG502QV2G">
    <property type="taxonomic scope" value="Eukaryota"/>
</dbReference>
<dbReference type="GeneTree" id="ENSGT01130000278276"/>
<dbReference type="HOGENOM" id="CLU_037388_4_0_1"/>
<dbReference type="InParanoid" id="Q80XF7"/>
<dbReference type="OMA" id="ACTKGAG"/>
<dbReference type="OrthoDB" id="10061722at2759"/>
<dbReference type="PhylomeDB" id="Q80XF7"/>
<dbReference type="Reactome" id="R-RNO-190861">
    <property type="pathway name" value="Gap junction assembly"/>
</dbReference>
<dbReference type="PRO" id="PR:Q80XF7"/>
<dbReference type="Proteomes" id="UP000002494">
    <property type="component" value="Chromosome 10"/>
</dbReference>
<dbReference type="Bgee" id="ENSRNOG00000038328">
    <property type="expression patterns" value="Expressed in cerebellum and 15 other cell types or tissues"/>
</dbReference>
<dbReference type="GO" id="GO:0005922">
    <property type="term" value="C:connexin complex"/>
    <property type="evidence" value="ECO:0000318"/>
    <property type="project" value="GO_Central"/>
</dbReference>
<dbReference type="GO" id="GO:0005921">
    <property type="term" value="C:gap junction"/>
    <property type="evidence" value="ECO:0000314"/>
    <property type="project" value="RGD"/>
</dbReference>
<dbReference type="GO" id="GO:0043209">
    <property type="term" value="C:myelin sheath"/>
    <property type="evidence" value="ECO:0000266"/>
    <property type="project" value="RGD"/>
</dbReference>
<dbReference type="GO" id="GO:0043025">
    <property type="term" value="C:neuronal cell body"/>
    <property type="evidence" value="ECO:0000314"/>
    <property type="project" value="RGD"/>
</dbReference>
<dbReference type="GO" id="GO:0033270">
    <property type="term" value="C:paranode region of axon"/>
    <property type="evidence" value="ECO:0000314"/>
    <property type="project" value="RGD"/>
</dbReference>
<dbReference type="GO" id="GO:0043204">
    <property type="term" value="C:perikaryon"/>
    <property type="evidence" value="ECO:0000314"/>
    <property type="project" value="RGD"/>
</dbReference>
<dbReference type="GO" id="GO:1990769">
    <property type="term" value="C:proximal neuron projection"/>
    <property type="evidence" value="ECO:0000314"/>
    <property type="project" value="RGD"/>
</dbReference>
<dbReference type="GO" id="GO:0005243">
    <property type="term" value="F:gap junction channel activity"/>
    <property type="evidence" value="ECO:0000266"/>
    <property type="project" value="RGD"/>
</dbReference>
<dbReference type="GO" id="GO:1903763">
    <property type="term" value="F:gap junction channel activity involved in cell communication by electrical coupling"/>
    <property type="evidence" value="ECO:0000266"/>
    <property type="project" value="RGD"/>
</dbReference>
<dbReference type="GO" id="GO:0010644">
    <property type="term" value="P:cell communication by electrical coupling"/>
    <property type="evidence" value="ECO:0000266"/>
    <property type="project" value="RGD"/>
</dbReference>
<dbReference type="GO" id="GO:0007267">
    <property type="term" value="P:cell-cell signaling"/>
    <property type="evidence" value="ECO:0000266"/>
    <property type="project" value="RGD"/>
</dbReference>
<dbReference type="GO" id="GO:2000134">
    <property type="term" value="P:negative regulation of G1/S transition of mitotic cell cycle"/>
    <property type="evidence" value="ECO:0000315"/>
    <property type="project" value="RGD"/>
</dbReference>
<dbReference type="GO" id="GO:1904427">
    <property type="term" value="P:positive regulation of calcium ion transmembrane transport"/>
    <property type="evidence" value="ECO:0000315"/>
    <property type="project" value="RGD"/>
</dbReference>
<dbReference type="GO" id="GO:0010628">
    <property type="term" value="P:positive regulation of gene expression"/>
    <property type="evidence" value="ECO:0000315"/>
    <property type="project" value="RGD"/>
</dbReference>
<dbReference type="GO" id="GO:0070447">
    <property type="term" value="P:positive regulation of oligodendrocyte progenitor proliferation"/>
    <property type="evidence" value="ECO:0000315"/>
    <property type="project" value="RGD"/>
</dbReference>
<dbReference type="GO" id="GO:0009636">
    <property type="term" value="P:response to toxic substance"/>
    <property type="evidence" value="ECO:0000266"/>
    <property type="project" value="RGD"/>
</dbReference>
<dbReference type="Gene3D" id="1.20.1440.80">
    <property type="entry name" value="Gap junction channel protein cysteine-rich domain"/>
    <property type="match status" value="1"/>
</dbReference>
<dbReference type="InterPro" id="IPR000500">
    <property type="entry name" value="Connexin"/>
</dbReference>
<dbReference type="InterPro" id="IPR019570">
    <property type="entry name" value="Connexin_CCC"/>
</dbReference>
<dbReference type="InterPro" id="IPR017990">
    <property type="entry name" value="Connexin_CS"/>
</dbReference>
<dbReference type="InterPro" id="IPR013092">
    <property type="entry name" value="Connexin_N"/>
</dbReference>
<dbReference type="InterPro" id="IPR038359">
    <property type="entry name" value="Connexin_N_sf"/>
</dbReference>
<dbReference type="PANTHER" id="PTHR11984">
    <property type="entry name" value="CONNEXIN"/>
    <property type="match status" value="1"/>
</dbReference>
<dbReference type="PANTHER" id="PTHR11984:SF52">
    <property type="entry name" value="GAP JUNCTION GAMMA-2 PROTEIN"/>
    <property type="match status" value="1"/>
</dbReference>
<dbReference type="Pfam" id="PF00029">
    <property type="entry name" value="Connexin"/>
    <property type="match status" value="1"/>
</dbReference>
<dbReference type="PRINTS" id="PR00206">
    <property type="entry name" value="CONNEXIN"/>
</dbReference>
<dbReference type="SMART" id="SM00037">
    <property type="entry name" value="CNX"/>
    <property type="match status" value="1"/>
</dbReference>
<dbReference type="SMART" id="SM01089">
    <property type="entry name" value="Connexin_CCC"/>
    <property type="match status" value="1"/>
</dbReference>
<dbReference type="PROSITE" id="PS00407">
    <property type="entry name" value="CONNEXINS_1"/>
    <property type="match status" value="1"/>
</dbReference>
<dbReference type="PROSITE" id="PS00408">
    <property type="entry name" value="CONNEXINS_2"/>
    <property type="match status" value="1"/>
</dbReference>
<evidence type="ECO:0000250" key="1"/>
<evidence type="ECO:0000250" key="2">
    <source>
        <dbReference type="UniProtKB" id="Q8BQU6"/>
    </source>
</evidence>
<evidence type="ECO:0000255" key="3"/>
<evidence type="ECO:0000256" key="4">
    <source>
        <dbReference type="SAM" id="MobiDB-lite"/>
    </source>
</evidence>
<evidence type="ECO:0000269" key="5">
    <source>
    </source>
</evidence>
<evidence type="ECO:0000305" key="6"/>
<reference key="1">
    <citation type="journal article" date="2004" name="Nature">
        <title>Genome sequence of the Brown Norway rat yields insights into mammalian evolution.</title>
        <authorList>
            <person name="Gibbs R.A."/>
            <person name="Weinstock G.M."/>
            <person name="Metzker M.L."/>
            <person name="Muzny D.M."/>
            <person name="Sodergren E.J."/>
            <person name="Scherer S."/>
            <person name="Scott G."/>
            <person name="Steffen D."/>
            <person name="Worley K.C."/>
            <person name="Burch P.E."/>
            <person name="Okwuonu G."/>
            <person name="Hines S."/>
            <person name="Lewis L."/>
            <person name="Deramo C."/>
            <person name="Delgado O."/>
            <person name="Dugan-Rocha S."/>
            <person name="Miner G."/>
            <person name="Morgan M."/>
            <person name="Hawes A."/>
            <person name="Gill R."/>
            <person name="Holt R.A."/>
            <person name="Adams M.D."/>
            <person name="Amanatides P.G."/>
            <person name="Baden-Tillson H."/>
            <person name="Barnstead M."/>
            <person name="Chin S."/>
            <person name="Evans C.A."/>
            <person name="Ferriera S."/>
            <person name="Fosler C."/>
            <person name="Glodek A."/>
            <person name="Gu Z."/>
            <person name="Jennings D."/>
            <person name="Kraft C.L."/>
            <person name="Nguyen T."/>
            <person name="Pfannkoch C.M."/>
            <person name="Sitter C."/>
            <person name="Sutton G.G."/>
            <person name="Venter J.C."/>
            <person name="Woodage T."/>
            <person name="Smith D."/>
            <person name="Lee H.-M."/>
            <person name="Gustafson E."/>
            <person name="Cahill P."/>
            <person name="Kana A."/>
            <person name="Doucette-Stamm L."/>
            <person name="Weinstock K."/>
            <person name="Fechtel K."/>
            <person name="Weiss R.B."/>
            <person name="Dunn D.M."/>
            <person name="Green E.D."/>
            <person name="Blakesley R.W."/>
            <person name="Bouffard G.G."/>
            <person name="De Jong P.J."/>
            <person name="Osoegawa K."/>
            <person name="Zhu B."/>
            <person name="Marra M."/>
            <person name="Schein J."/>
            <person name="Bosdet I."/>
            <person name="Fjell C."/>
            <person name="Jones S."/>
            <person name="Krzywinski M."/>
            <person name="Mathewson C."/>
            <person name="Siddiqui A."/>
            <person name="Wye N."/>
            <person name="McPherson J."/>
            <person name="Zhao S."/>
            <person name="Fraser C.M."/>
            <person name="Shetty J."/>
            <person name="Shatsman S."/>
            <person name="Geer K."/>
            <person name="Chen Y."/>
            <person name="Abramzon S."/>
            <person name="Nierman W.C."/>
            <person name="Havlak P.H."/>
            <person name="Chen R."/>
            <person name="Durbin K.J."/>
            <person name="Egan A."/>
            <person name="Ren Y."/>
            <person name="Song X.-Z."/>
            <person name="Li B."/>
            <person name="Liu Y."/>
            <person name="Qin X."/>
            <person name="Cawley S."/>
            <person name="Cooney A.J."/>
            <person name="D'Souza L.M."/>
            <person name="Martin K."/>
            <person name="Wu J.Q."/>
            <person name="Gonzalez-Garay M.L."/>
            <person name="Jackson A.R."/>
            <person name="Kalafus K.J."/>
            <person name="McLeod M.P."/>
            <person name="Milosavljevic A."/>
            <person name="Virk D."/>
            <person name="Volkov A."/>
            <person name="Wheeler D.A."/>
            <person name="Zhang Z."/>
            <person name="Bailey J.A."/>
            <person name="Eichler E.E."/>
            <person name="Tuzun E."/>
            <person name="Birney E."/>
            <person name="Mongin E."/>
            <person name="Ureta-Vidal A."/>
            <person name="Woodwark C."/>
            <person name="Zdobnov E."/>
            <person name="Bork P."/>
            <person name="Suyama M."/>
            <person name="Torrents D."/>
            <person name="Alexandersson M."/>
            <person name="Trask B.J."/>
            <person name="Young J.M."/>
            <person name="Huang H."/>
            <person name="Wang H."/>
            <person name="Xing H."/>
            <person name="Daniels S."/>
            <person name="Gietzen D."/>
            <person name="Schmidt J."/>
            <person name="Stevens K."/>
            <person name="Vitt U."/>
            <person name="Wingrove J."/>
            <person name="Camara F."/>
            <person name="Mar Alba M."/>
            <person name="Abril J.F."/>
            <person name="Guigo R."/>
            <person name="Smit A."/>
            <person name="Dubchak I."/>
            <person name="Rubin E.M."/>
            <person name="Couronne O."/>
            <person name="Poliakov A."/>
            <person name="Huebner N."/>
            <person name="Ganten D."/>
            <person name="Goesele C."/>
            <person name="Hummel O."/>
            <person name="Kreitler T."/>
            <person name="Lee Y.-A."/>
            <person name="Monti J."/>
            <person name="Schulz H."/>
            <person name="Zimdahl H."/>
            <person name="Himmelbauer H."/>
            <person name="Lehrach H."/>
            <person name="Jacob H.J."/>
            <person name="Bromberg S."/>
            <person name="Gullings-Handley J."/>
            <person name="Jensen-Seaman M.I."/>
            <person name="Kwitek A.E."/>
            <person name="Lazar J."/>
            <person name="Pasko D."/>
            <person name="Tonellato P.J."/>
            <person name="Twigger S."/>
            <person name="Ponting C.P."/>
            <person name="Duarte J.M."/>
            <person name="Rice S."/>
            <person name="Goodstadt L."/>
            <person name="Beatson S.A."/>
            <person name="Emes R.D."/>
            <person name="Winter E.E."/>
            <person name="Webber C."/>
            <person name="Brandt P."/>
            <person name="Nyakatura G."/>
            <person name="Adetobi M."/>
            <person name="Chiaromonte F."/>
            <person name="Elnitski L."/>
            <person name="Eswara P."/>
            <person name="Hardison R.C."/>
            <person name="Hou M."/>
            <person name="Kolbe D."/>
            <person name="Makova K."/>
            <person name="Miller W."/>
            <person name="Nekrutenko A."/>
            <person name="Riemer C."/>
            <person name="Schwartz S."/>
            <person name="Taylor J."/>
            <person name="Yang S."/>
            <person name="Zhang Y."/>
            <person name="Lindpaintner K."/>
            <person name="Andrews T.D."/>
            <person name="Caccamo M."/>
            <person name="Clamp M."/>
            <person name="Clarke L."/>
            <person name="Curwen V."/>
            <person name="Durbin R.M."/>
            <person name="Eyras E."/>
            <person name="Searle S.M."/>
            <person name="Cooper G.M."/>
            <person name="Batzoglou S."/>
            <person name="Brudno M."/>
            <person name="Sidow A."/>
            <person name="Stone E.A."/>
            <person name="Payseur B.A."/>
            <person name="Bourque G."/>
            <person name="Lopez-Otin C."/>
            <person name="Puente X.S."/>
            <person name="Chakrabarti K."/>
            <person name="Chatterji S."/>
            <person name="Dewey C."/>
            <person name="Pachter L."/>
            <person name="Bray N."/>
            <person name="Yap V.B."/>
            <person name="Caspi A."/>
            <person name="Tesler G."/>
            <person name="Pevzner P.A."/>
            <person name="Haussler D."/>
            <person name="Roskin K.M."/>
            <person name="Baertsch R."/>
            <person name="Clawson H."/>
            <person name="Furey T.S."/>
            <person name="Hinrichs A.S."/>
            <person name="Karolchik D."/>
            <person name="Kent W.J."/>
            <person name="Rosenbloom K.R."/>
            <person name="Trumbower H."/>
            <person name="Weirauch M."/>
            <person name="Cooper D.N."/>
            <person name="Stenson P.D."/>
            <person name="Ma B."/>
            <person name="Brent M."/>
            <person name="Arumugam M."/>
            <person name="Shteynberg D."/>
            <person name="Copley R.R."/>
            <person name="Taylor M.S."/>
            <person name="Riethman H."/>
            <person name="Mudunuri U."/>
            <person name="Peterson J."/>
            <person name="Guyer M."/>
            <person name="Felsenfeld A."/>
            <person name="Old S."/>
            <person name="Mockrin S."/>
            <person name="Collins F.S."/>
        </authorList>
    </citation>
    <scope>NUCLEOTIDE SEQUENCE [LARGE SCALE GENOMIC DNA]</scope>
    <source>
        <strain>Brown Norway</strain>
    </source>
</reference>
<reference key="2">
    <citation type="journal article" date="2004" name="Cell Commun. Adhes.">
        <title>The detection of hamster connexins: a comparison of expression profiles with wild-type mouse and the cancer-prone min mouse.</title>
        <authorList>
            <person name="Cruciani V."/>
            <person name="Heintz K.-M."/>
            <person name="Husoey T."/>
            <person name="Hovig E."/>
            <person name="Warren D.J."/>
            <person name="Mikalsen S.-O."/>
        </authorList>
    </citation>
    <scope>NUCLEOTIDE SEQUENCE [GENOMIC DNA] OF 26-434</scope>
</reference>
<reference key="3">
    <citation type="journal article" date="2004" name="Glia">
        <title>Unique distributions of the gap junction proteins connexin29, connexin32, and connexin47 in oligodendrocytes.</title>
        <authorList>
            <person name="Kleopa K.A."/>
            <person name="Orthmann J.L."/>
            <person name="Enriquez A."/>
            <person name="Paul D.L."/>
            <person name="Scherer S.S."/>
        </authorList>
    </citation>
    <scope>TISSUE SPECIFICITY</scope>
</reference>
<accession>Q80XF7</accession>
<feature type="chain" id="PRO_0000057844" description="Gap junction gamma-2 protein">
    <location>
        <begin position="1"/>
        <end position="440"/>
    </location>
</feature>
<feature type="topological domain" description="Cytoplasmic" evidence="3">
    <location>
        <begin position="1"/>
        <end position="21"/>
    </location>
</feature>
<feature type="transmembrane region" description="Helical" evidence="3">
    <location>
        <begin position="22"/>
        <end position="42"/>
    </location>
</feature>
<feature type="topological domain" description="Extracellular" evidence="3">
    <location>
        <begin position="43"/>
        <end position="78"/>
    </location>
</feature>
<feature type="transmembrane region" description="Helical" evidence="3">
    <location>
        <begin position="79"/>
        <end position="99"/>
    </location>
</feature>
<feature type="topological domain" description="Cytoplasmic" evidence="3">
    <location>
        <begin position="100"/>
        <end position="223"/>
    </location>
</feature>
<feature type="transmembrane region" description="Helical" evidence="3">
    <location>
        <begin position="224"/>
        <end position="244"/>
    </location>
</feature>
<feature type="topological domain" description="Extracellular" evidence="3">
    <location>
        <begin position="245"/>
        <end position="264"/>
    </location>
</feature>
<feature type="transmembrane region" description="Helical" evidence="3">
    <location>
        <begin position="265"/>
        <end position="285"/>
    </location>
</feature>
<feature type="topological domain" description="Cytoplasmic" evidence="3">
    <location>
        <begin position="286"/>
        <end position="440"/>
    </location>
</feature>
<feature type="region of interest" description="Disordered" evidence="4">
    <location>
        <begin position="108"/>
        <end position="199"/>
    </location>
</feature>
<feature type="region of interest" description="Disordered" evidence="4">
    <location>
        <begin position="368"/>
        <end position="440"/>
    </location>
</feature>
<feature type="compositionally biased region" description="Basic residues" evidence="4">
    <location>
        <begin position="112"/>
        <end position="124"/>
    </location>
</feature>
<feature type="compositionally biased region" description="Acidic residues" evidence="4">
    <location>
        <begin position="150"/>
        <end position="173"/>
    </location>
</feature>
<feature type="compositionally biased region" description="Low complexity" evidence="4">
    <location>
        <begin position="380"/>
        <end position="401"/>
    </location>
</feature>
<feature type="modified residue" description="Phosphoserine" evidence="2">
    <location>
        <position position="372"/>
    </location>
</feature>